<accession>C1L0I0</accession>
<organism>
    <name type="scientific">Listeria monocytogenes serotype 4b (strain CLIP80459)</name>
    <dbReference type="NCBI Taxonomy" id="568819"/>
    <lineage>
        <taxon>Bacteria</taxon>
        <taxon>Bacillati</taxon>
        <taxon>Bacillota</taxon>
        <taxon>Bacilli</taxon>
        <taxon>Bacillales</taxon>
        <taxon>Listeriaceae</taxon>
        <taxon>Listeria</taxon>
    </lineage>
</organism>
<gene>
    <name evidence="1" type="primary">rhaD</name>
    <name type="ordered locus">Lm4b_02819</name>
</gene>
<keyword id="KW-0963">Cytoplasm</keyword>
<keyword id="KW-0456">Lyase</keyword>
<keyword id="KW-0479">Metal-binding</keyword>
<keyword id="KW-0684">Rhamnose metabolism</keyword>
<keyword id="KW-0862">Zinc</keyword>
<proteinExistence type="inferred from homology"/>
<feature type="chain" id="PRO_1000212899" description="Rhamnulose-1-phosphate aldolase">
    <location>
        <begin position="1"/>
        <end position="273"/>
    </location>
</feature>
<feature type="active site" evidence="1">
    <location>
        <position position="117"/>
    </location>
</feature>
<feature type="binding site" evidence="1">
    <location>
        <position position="140"/>
    </location>
    <ligand>
        <name>Zn(2+)</name>
        <dbReference type="ChEBI" id="CHEBI:29105"/>
    </ligand>
</feature>
<feature type="binding site" evidence="1">
    <location>
        <position position="142"/>
    </location>
    <ligand>
        <name>Zn(2+)</name>
        <dbReference type="ChEBI" id="CHEBI:29105"/>
    </ligand>
</feature>
<feature type="binding site" evidence="1">
    <location>
        <position position="211"/>
    </location>
    <ligand>
        <name>Zn(2+)</name>
        <dbReference type="ChEBI" id="CHEBI:29105"/>
    </ligand>
</feature>
<reference key="1">
    <citation type="journal article" date="2012" name="BMC Genomics">
        <title>Comparative genomics and transcriptomics of lineages I, II, and III strains of Listeria monocytogenes.</title>
        <authorList>
            <person name="Hain T."/>
            <person name="Ghai R."/>
            <person name="Billion A."/>
            <person name="Kuenne C.T."/>
            <person name="Steinweg C."/>
            <person name="Izar B."/>
            <person name="Mohamed W."/>
            <person name="Mraheil M."/>
            <person name="Domann E."/>
            <person name="Schaffrath S."/>
            <person name="Karst U."/>
            <person name="Goesmann A."/>
            <person name="Oehm S."/>
            <person name="Puhler A."/>
            <person name="Merkl R."/>
            <person name="Vorwerk S."/>
            <person name="Glaser P."/>
            <person name="Garrido P."/>
            <person name="Rusniok C."/>
            <person name="Buchrieser C."/>
            <person name="Goebel W."/>
            <person name="Chakraborty T."/>
        </authorList>
    </citation>
    <scope>NUCLEOTIDE SEQUENCE [LARGE SCALE GENOMIC DNA]</scope>
    <source>
        <strain>CLIP80459</strain>
    </source>
</reference>
<name>RHAD_LISMC</name>
<comment type="function">
    <text evidence="1">Catalyzes the reversible cleavage of L-rhamnulose-1-phosphate to dihydroxyacetone phosphate (DHAP) and L-lactaldehyde.</text>
</comment>
<comment type="catalytic activity">
    <reaction evidence="1">
        <text>L-rhamnulose 1-phosphate = (S)-lactaldehyde + dihydroxyacetone phosphate</text>
        <dbReference type="Rhea" id="RHEA:19689"/>
        <dbReference type="ChEBI" id="CHEBI:18041"/>
        <dbReference type="ChEBI" id="CHEBI:57642"/>
        <dbReference type="ChEBI" id="CHEBI:58313"/>
        <dbReference type="EC" id="4.1.2.19"/>
    </reaction>
</comment>
<comment type="cofactor">
    <cofactor evidence="1">
        <name>Zn(2+)</name>
        <dbReference type="ChEBI" id="CHEBI:29105"/>
    </cofactor>
    <text evidence="1">Binds 1 zinc ion per subunit.</text>
</comment>
<comment type="pathway">
    <text evidence="1">Carbohydrate degradation; L-rhamnose degradation; glycerone phosphate from L-rhamnose: step 3/3.</text>
</comment>
<comment type="subcellular location">
    <subcellularLocation>
        <location evidence="1">Cytoplasm</location>
    </subcellularLocation>
</comment>
<comment type="similarity">
    <text evidence="1">Belongs to the aldolase class II family. RhaD subfamily.</text>
</comment>
<dbReference type="EC" id="4.1.2.19" evidence="1"/>
<dbReference type="EMBL" id="FM242711">
    <property type="protein sequence ID" value="CAS06573.1"/>
    <property type="molecule type" value="Genomic_DNA"/>
</dbReference>
<dbReference type="RefSeq" id="WP_003727578.1">
    <property type="nucleotide sequence ID" value="NC_012488.1"/>
</dbReference>
<dbReference type="SMR" id="C1L0I0"/>
<dbReference type="KEGG" id="lmc:Lm4b_02819"/>
<dbReference type="HOGENOM" id="CLU_076831_0_0_9"/>
<dbReference type="UniPathway" id="UPA00541">
    <property type="reaction ID" value="UER00603"/>
</dbReference>
<dbReference type="GO" id="GO:0005829">
    <property type="term" value="C:cytosol"/>
    <property type="evidence" value="ECO:0007669"/>
    <property type="project" value="TreeGrafter"/>
</dbReference>
<dbReference type="GO" id="GO:0046872">
    <property type="term" value="F:metal ion binding"/>
    <property type="evidence" value="ECO:0007669"/>
    <property type="project" value="UniProtKB-KW"/>
</dbReference>
<dbReference type="GO" id="GO:0008994">
    <property type="term" value="F:rhamnulose-1-phosphate aldolase activity"/>
    <property type="evidence" value="ECO:0007669"/>
    <property type="project" value="UniProtKB-UniRule"/>
</dbReference>
<dbReference type="GO" id="GO:0019323">
    <property type="term" value="P:pentose catabolic process"/>
    <property type="evidence" value="ECO:0007669"/>
    <property type="project" value="TreeGrafter"/>
</dbReference>
<dbReference type="GO" id="GO:0019301">
    <property type="term" value="P:rhamnose catabolic process"/>
    <property type="evidence" value="ECO:0007669"/>
    <property type="project" value="UniProtKB-UniRule"/>
</dbReference>
<dbReference type="Gene3D" id="3.40.225.10">
    <property type="entry name" value="Class II aldolase/adducin N-terminal domain"/>
    <property type="match status" value="1"/>
</dbReference>
<dbReference type="HAMAP" id="MF_00770">
    <property type="entry name" value="RhaD"/>
    <property type="match status" value="1"/>
</dbReference>
<dbReference type="InterPro" id="IPR050197">
    <property type="entry name" value="Aldolase_class_II_sugar_metab"/>
</dbReference>
<dbReference type="InterPro" id="IPR001303">
    <property type="entry name" value="Aldolase_II/adducin_N"/>
</dbReference>
<dbReference type="InterPro" id="IPR036409">
    <property type="entry name" value="Aldolase_II/adducin_N_sf"/>
</dbReference>
<dbReference type="InterPro" id="IPR013447">
    <property type="entry name" value="Rhamnulose-1-P_Aldolase"/>
</dbReference>
<dbReference type="NCBIfam" id="NF002963">
    <property type="entry name" value="PRK03634.1"/>
    <property type="match status" value="1"/>
</dbReference>
<dbReference type="NCBIfam" id="TIGR02624">
    <property type="entry name" value="rhamnu_1P_ald"/>
    <property type="match status" value="1"/>
</dbReference>
<dbReference type="PANTHER" id="PTHR22789:SF0">
    <property type="entry name" value="3-OXO-TETRONATE 4-PHOSPHATE DECARBOXYLASE-RELATED"/>
    <property type="match status" value="1"/>
</dbReference>
<dbReference type="PANTHER" id="PTHR22789">
    <property type="entry name" value="FUCULOSE PHOSPHATE ALDOLASE"/>
    <property type="match status" value="1"/>
</dbReference>
<dbReference type="Pfam" id="PF00596">
    <property type="entry name" value="Aldolase_II"/>
    <property type="match status" value="1"/>
</dbReference>
<dbReference type="SMART" id="SM01007">
    <property type="entry name" value="Aldolase_II"/>
    <property type="match status" value="1"/>
</dbReference>
<dbReference type="SUPFAM" id="SSF53639">
    <property type="entry name" value="AraD/HMP-PK domain-like"/>
    <property type="match status" value="1"/>
</dbReference>
<evidence type="ECO:0000255" key="1">
    <source>
        <dbReference type="HAMAP-Rule" id="MF_00770"/>
    </source>
</evidence>
<protein>
    <recommendedName>
        <fullName evidence="1">Rhamnulose-1-phosphate aldolase</fullName>
        <ecNumber evidence="1">4.1.2.19</ecNumber>
    </recommendedName>
</protein>
<sequence length="273" mass="30516">MTKDIMDAVFIKEMAKTTSNLYRLGWDERNGGNITYLLDEKEVVEYLDVKQIIRTIPMDFDGKKLAGKYFLVTGSGKYFKNVEEAPAVNLGVIQVSEDGKAVHLLWGYTDGGLPTSELPAHFMSHIARLSVDPENRVVMHCHATHLLAMTFTHELTEREFTRTLWQMCTECLVVFPEGVGIIPWLVPGTNEIGEATSEKMKENRLIVWPHHGIYGAGKSMDETFGLIETAEKAAEVYTIVMSQGGIKQAITDEQLKALGERFGVEAKAGYLNN</sequence>